<evidence type="ECO:0000255" key="1">
    <source>
        <dbReference type="HAMAP-Rule" id="MF_01400"/>
    </source>
</evidence>
<evidence type="ECO:0000255" key="2">
    <source>
        <dbReference type="PROSITE-ProRule" id="PRU01126"/>
    </source>
</evidence>
<keyword id="KW-0479">Metal-binding</keyword>
<keyword id="KW-0560">Oxidoreductase</keyword>
<keyword id="KW-1185">Reference proteome</keyword>
<keyword id="KW-0862">Zinc</keyword>
<name>MSRB_TERTT</name>
<accession>C5BR54</accession>
<reference key="1">
    <citation type="journal article" date="2009" name="PLoS ONE">
        <title>The complete genome of Teredinibacter turnerae T7901: an intracellular endosymbiont of marine wood-boring bivalves (shipworms).</title>
        <authorList>
            <person name="Yang J.C."/>
            <person name="Madupu R."/>
            <person name="Durkin A.S."/>
            <person name="Ekborg N.A."/>
            <person name="Pedamallu C.S."/>
            <person name="Hostetler J.B."/>
            <person name="Radune D."/>
            <person name="Toms B.S."/>
            <person name="Henrissat B."/>
            <person name="Coutinho P.M."/>
            <person name="Schwarz S."/>
            <person name="Field L."/>
            <person name="Trindade-Silva A.E."/>
            <person name="Soares C.A.G."/>
            <person name="Elshahawi S."/>
            <person name="Hanora A."/>
            <person name="Schmidt E.W."/>
            <person name="Haygood M.G."/>
            <person name="Posfai J."/>
            <person name="Benner J."/>
            <person name="Madinger C."/>
            <person name="Nove J."/>
            <person name="Anton B."/>
            <person name="Chaudhary K."/>
            <person name="Foster J."/>
            <person name="Holman A."/>
            <person name="Kumar S."/>
            <person name="Lessard P.A."/>
            <person name="Luyten Y.A."/>
            <person name="Slatko B."/>
            <person name="Wood N."/>
            <person name="Wu B."/>
            <person name="Teplitski M."/>
            <person name="Mougous J.D."/>
            <person name="Ward N."/>
            <person name="Eisen J.A."/>
            <person name="Badger J.H."/>
            <person name="Distel D.L."/>
        </authorList>
    </citation>
    <scope>NUCLEOTIDE SEQUENCE [LARGE SCALE GENOMIC DNA]</scope>
    <source>
        <strain>ATCC 39867 / T7901</strain>
    </source>
</reference>
<organism>
    <name type="scientific">Teredinibacter turnerae (strain ATCC 39867 / T7901)</name>
    <dbReference type="NCBI Taxonomy" id="377629"/>
    <lineage>
        <taxon>Bacteria</taxon>
        <taxon>Pseudomonadati</taxon>
        <taxon>Pseudomonadota</taxon>
        <taxon>Gammaproteobacteria</taxon>
        <taxon>Cellvibrionales</taxon>
        <taxon>Cellvibrionaceae</taxon>
        <taxon>Teredinibacter</taxon>
    </lineage>
</organism>
<protein>
    <recommendedName>
        <fullName evidence="1">Peptide methionine sulfoxide reductase MsrB</fullName>
        <ecNumber evidence="1">1.8.4.12</ecNumber>
    </recommendedName>
    <alternativeName>
        <fullName evidence="1">Peptide-methionine (R)-S-oxide reductase</fullName>
    </alternativeName>
</protein>
<dbReference type="EC" id="1.8.4.12" evidence="1"/>
<dbReference type="EMBL" id="CP001614">
    <property type="protein sequence ID" value="ACR12292.1"/>
    <property type="molecule type" value="Genomic_DNA"/>
</dbReference>
<dbReference type="RefSeq" id="WP_015818404.1">
    <property type="nucleotide sequence ID" value="NC_012997.1"/>
</dbReference>
<dbReference type="SMR" id="C5BR54"/>
<dbReference type="STRING" id="377629.TERTU_1133"/>
<dbReference type="KEGG" id="ttu:TERTU_1133"/>
<dbReference type="eggNOG" id="COG0229">
    <property type="taxonomic scope" value="Bacteria"/>
</dbReference>
<dbReference type="HOGENOM" id="CLU_031040_8_5_6"/>
<dbReference type="OrthoDB" id="9785497at2"/>
<dbReference type="Proteomes" id="UP000009080">
    <property type="component" value="Chromosome"/>
</dbReference>
<dbReference type="GO" id="GO:0005737">
    <property type="term" value="C:cytoplasm"/>
    <property type="evidence" value="ECO:0007669"/>
    <property type="project" value="TreeGrafter"/>
</dbReference>
<dbReference type="GO" id="GO:0033743">
    <property type="term" value="F:peptide-methionine (R)-S-oxide reductase activity"/>
    <property type="evidence" value="ECO:0007669"/>
    <property type="project" value="UniProtKB-UniRule"/>
</dbReference>
<dbReference type="GO" id="GO:0008270">
    <property type="term" value="F:zinc ion binding"/>
    <property type="evidence" value="ECO:0007669"/>
    <property type="project" value="UniProtKB-UniRule"/>
</dbReference>
<dbReference type="GO" id="GO:0030091">
    <property type="term" value="P:protein repair"/>
    <property type="evidence" value="ECO:0007669"/>
    <property type="project" value="InterPro"/>
</dbReference>
<dbReference type="GO" id="GO:0006979">
    <property type="term" value="P:response to oxidative stress"/>
    <property type="evidence" value="ECO:0007669"/>
    <property type="project" value="InterPro"/>
</dbReference>
<dbReference type="FunFam" id="2.170.150.20:FF:000001">
    <property type="entry name" value="Peptide methionine sulfoxide reductase MsrB"/>
    <property type="match status" value="1"/>
</dbReference>
<dbReference type="Gene3D" id="2.170.150.20">
    <property type="entry name" value="Peptide methionine sulfoxide reductase"/>
    <property type="match status" value="1"/>
</dbReference>
<dbReference type="HAMAP" id="MF_01400">
    <property type="entry name" value="MsrB"/>
    <property type="match status" value="1"/>
</dbReference>
<dbReference type="InterPro" id="IPR028427">
    <property type="entry name" value="Met_Sox_Rdtase_MsrB"/>
</dbReference>
<dbReference type="InterPro" id="IPR002579">
    <property type="entry name" value="Met_Sox_Rdtase_MsrB_dom"/>
</dbReference>
<dbReference type="InterPro" id="IPR011057">
    <property type="entry name" value="Mss4-like_sf"/>
</dbReference>
<dbReference type="NCBIfam" id="TIGR00357">
    <property type="entry name" value="peptide-methionine (R)-S-oxide reductase MsrB"/>
    <property type="match status" value="1"/>
</dbReference>
<dbReference type="PANTHER" id="PTHR10173">
    <property type="entry name" value="METHIONINE SULFOXIDE REDUCTASE"/>
    <property type="match status" value="1"/>
</dbReference>
<dbReference type="PANTHER" id="PTHR10173:SF52">
    <property type="entry name" value="METHIONINE-R-SULFOXIDE REDUCTASE B1"/>
    <property type="match status" value="1"/>
</dbReference>
<dbReference type="Pfam" id="PF01641">
    <property type="entry name" value="SelR"/>
    <property type="match status" value="1"/>
</dbReference>
<dbReference type="SUPFAM" id="SSF51316">
    <property type="entry name" value="Mss4-like"/>
    <property type="match status" value="1"/>
</dbReference>
<dbReference type="PROSITE" id="PS51790">
    <property type="entry name" value="MSRB"/>
    <property type="match status" value="1"/>
</dbReference>
<comment type="catalytic activity">
    <reaction evidence="1">
        <text>L-methionyl-[protein] + [thioredoxin]-disulfide + H2O = L-methionyl-(R)-S-oxide-[protein] + [thioredoxin]-dithiol</text>
        <dbReference type="Rhea" id="RHEA:24164"/>
        <dbReference type="Rhea" id="RHEA-COMP:10698"/>
        <dbReference type="Rhea" id="RHEA-COMP:10700"/>
        <dbReference type="Rhea" id="RHEA-COMP:12313"/>
        <dbReference type="Rhea" id="RHEA-COMP:12314"/>
        <dbReference type="ChEBI" id="CHEBI:15377"/>
        <dbReference type="ChEBI" id="CHEBI:16044"/>
        <dbReference type="ChEBI" id="CHEBI:29950"/>
        <dbReference type="ChEBI" id="CHEBI:45764"/>
        <dbReference type="ChEBI" id="CHEBI:50058"/>
        <dbReference type="EC" id="1.8.4.12"/>
    </reaction>
</comment>
<comment type="cofactor">
    <cofactor evidence="1">
        <name>Zn(2+)</name>
        <dbReference type="ChEBI" id="CHEBI:29105"/>
    </cofactor>
    <text evidence="1">Binds 1 zinc ion per subunit. The zinc ion is important for the structural integrity of the protein.</text>
</comment>
<comment type="similarity">
    <text evidence="1">Belongs to the MsrB Met sulfoxide reductase family.</text>
</comment>
<proteinExistence type="inferred from homology"/>
<feature type="chain" id="PRO_1000215181" description="Peptide methionine sulfoxide reductase MsrB">
    <location>
        <begin position="1"/>
        <end position="135"/>
    </location>
</feature>
<feature type="domain" description="MsrB" evidence="2">
    <location>
        <begin position="9"/>
        <end position="131"/>
    </location>
</feature>
<feature type="active site" description="Nucleophile" evidence="2">
    <location>
        <position position="120"/>
    </location>
</feature>
<feature type="binding site" evidence="2">
    <location>
        <position position="48"/>
    </location>
    <ligand>
        <name>Zn(2+)</name>
        <dbReference type="ChEBI" id="CHEBI:29105"/>
    </ligand>
</feature>
<feature type="binding site" evidence="2">
    <location>
        <position position="51"/>
    </location>
    <ligand>
        <name>Zn(2+)</name>
        <dbReference type="ChEBI" id="CHEBI:29105"/>
    </ligand>
</feature>
<feature type="binding site" evidence="2">
    <location>
        <position position="97"/>
    </location>
    <ligand>
        <name>Zn(2+)</name>
        <dbReference type="ChEBI" id="CHEBI:29105"/>
    </ligand>
</feature>
<feature type="binding site" evidence="2">
    <location>
        <position position="100"/>
    </location>
    <ligand>
        <name>Zn(2+)</name>
        <dbReference type="ChEBI" id="CHEBI:29105"/>
    </ligand>
</feature>
<sequence length="135" mass="15291">MSDHNLKDDDYWRSKLTDEEFRICREKGTEMPFSGKYVDTTEAGTYLCRCCNTPLFKSLAKFDAGCGWPSFFEPLEKGVITEEMDTSLGMVRTEIMCEACGCHLGHVFTDGPQPTGLRYCVNSASIQFEEEKNQS</sequence>
<gene>
    <name evidence="1" type="primary">msrB</name>
    <name type="ordered locus">TERTU_1133</name>
</gene>